<accession>Q8QL28</accession>
<accession>Q5TJ91</accession>
<name>Y74_SIRV1</name>
<proteinExistence type="predicted"/>
<sequence length="74" mass="8587">MNYLKMSEQKKKSNLNTELTAKLYLALDDLTMALATEDKEEVRKSEVFQKALEVVKVVKEMRRLQVKPAEGEEK</sequence>
<reference key="1">
    <citation type="journal article" date="2001" name="Virology">
        <title>Sequences and replication of genomes of the archaeal rudiviruses SIRV1 and SIRV2: relationships to the archaeal lipothrixvirus SIFV and some eukaryal viruses.</title>
        <authorList>
            <person name="Peng X."/>
            <person name="Blum H."/>
            <person name="She Q."/>
            <person name="Mallok S."/>
            <person name="Bruegger K."/>
            <person name="Garrett R.A."/>
            <person name="Zillig W."/>
            <person name="Prangishvili D."/>
        </authorList>
    </citation>
    <scope>NUCLEOTIDE SEQUENCE [LARGE SCALE GENOMIC DNA]</scope>
    <source>
        <strain>Isolate variant VIII</strain>
    </source>
</reference>
<reference key="2">
    <citation type="journal article" date="2004" name="Mol. Microbiol.">
        <title>Multiple variants of the archaeal DNA rudivirus SIRV1 in a single host and a novel mechanism of genomic variation.</title>
        <authorList>
            <person name="Peng X."/>
            <person name="Kessler A."/>
            <person name="Phan H."/>
            <person name="Garrett R.A."/>
            <person name="Prangishvili D."/>
        </authorList>
    </citation>
    <scope>NUCLEOTIDE SEQUENCE [LARGE SCALE GENOMIC DNA]</scope>
    <source>
        <strain>Isolate variant XX</strain>
    </source>
</reference>
<organismHost>
    <name type="scientific">Saccharolobus islandicus</name>
    <name type="common">Sulfolobus islandicus</name>
    <dbReference type="NCBI Taxonomy" id="43080"/>
</organismHost>
<protein>
    <recommendedName>
        <fullName>Uncharacterized protein 74</fullName>
    </recommendedName>
</protein>
<dbReference type="EMBL" id="AJ414696">
    <property type="protein sequence ID" value="CAC93983.1"/>
    <property type="molecule type" value="Genomic_DNA"/>
</dbReference>
<dbReference type="EMBL" id="AJ748296">
    <property type="protein sequence ID" value="CAG38847.1"/>
    <property type="molecule type" value="Genomic_DNA"/>
</dbReference>
<dbReference type="RefSeq" id="NP_666616.1">
    <property type="nucleotide sequence ID" value="NC_004087.1"/>
</dbReference>
<dbReference type="SMR" id="Q8QL28"/>
<dbReference type="KEGG" id="vg:951381"/>
<dbReference type="OrthoDB" id="27290at10239"/>
<dbReference type="Proteomes" id="UP000002270">
    <property type="component" value="Genome"/>
</dbReference>
<dbReference type="Proteomes" id="UP000223181">
    <property type="component" value="Segment"/>
</dbReference>
<feature type="chain" id="PRO_0000342308" description="Uncharacterized protein 74">
    <location>
        <begin position="1"/>
        <end position="74"/>
    </location>
</feature>
<keyword id="KW-1185">Reference proteome</keyword>
<organism>
    <name type="scientific">Sulfolobus islandicus rod-shaped virus 1</name>
    <name type="common">SIRV-1</name>
    <name type="synonym">Sulfolobus virus SIRV-1</name>
    <dbReference type="NCBI Taxonomy" id="157898"/>
    <lineage>
        <taxon>Viruses</taxon>
        <taxon>Adnaviria</taxon>
        <taxon>Zilligvirae</taxon>
        <taxon>Taleaviricota</taxon>
        <taxon>Tokiviricetes</taxon>
        <taxon>Ligamenvirales</taxon>
        <taxon>Rudiviridae</taxon>
        <taxon>Icerudivirus</taxon>
        <taxon>Icerudivirus SIRV1</taxon>
    </lineage>
</organism>
<gene>
    <name type="ORF">74</name>
</gene>